<evidence type="ECO:0000250" key="1">
    <source>
        <dbReference type="UniProtKB" id="A0A5G2QD80"/>
    </source>
</evidence>
<evidence type="ECO:0000250" key="2">
    <source>
        <dbReference type="UniProtKB" id="Q13561"/>
    </source>
</evidence>
<evidence type="ECO:0000250" key="3">
    <source>
        <dbReference type="UniProtKB" id="Q99KJ8"/>
    </source>
</evidence>
<evidence type="ECO:0000255" key="4"/>
<evidence type="ECO:0000256" key="5">
    <source>
        <dbReference type="SAM" id="MobiDB-lite"/>
    </source>
</evidence>
<evidence type="ECO:0000305" key="6"/>
<proteinExistence type="evidence at transcript level"/>
<comment type="function">
    <text evidence="1 3">Part of the dynactin complex that activates the molecular motor dynein for ultra-processive transport along microtubules. In the dynactin soulder domain, binds the ACTR1A filament and acts as a molecular ruler to determine the length (By similarity). Modulates cytoplasmic dynein binding to an organelle, and plays a role in prometaphase chromosome alignment and spindle organization during mitosis. Involved in anchoring microtubules to centrosomes. May play a role in synapse formation during brain development (By similarity).</text>
</comment>
<comment type="subunit">
    <text evidence="1 2 3">Subunit of dynactin, a multiprotein complex part of a tripartite complex with dynein and a adapter, such as BICDL1, BICD2 or HOOK3. The dynactin complex is built around ACTR1A/ACTB filament and consists of an actin-related filament composed of a shoulder domain, a pointed end and a barbed end. Its length is defined by its flexible shoulder domain. The soulder is composed of 2 DCTN1 subunits, 4 DCTN2 and 2 DCTN3. The 4 DCNT2 (via N-terminus) bind the ACTR1A filament and act as molecular rulers to determine the length. The pointed end is important for binding dynein-dynactin cargo adapters and consists of 4 subunits: ACTR10, DCNT4, DCTN5 and DCTN6. The barbed end is composed of a CAPZA1:CAPZB heterodimers, which binds ACTR1A/ACTB filament and dynactin and stabilizes dynactin (By similarity). Interacts with BICD2 and CEP135 (By similarity). Interacts with DYNAP. Interacts with ECPAS. Interacts with MAPRE1 (By similarity).</text>
</comment>
<comment type="subcellular location">
    <subcellularLocation>
        <location evidence="2">Cytoplasm</location>
        <location evidence="2">Cytoskeleton</location>
        <location evidence="2">Microtubule organizing center</location>
        <location evidence="2">Centrosome</location>
    </subcellularLocation>
    <subcellularLocation>
        <location evidence="2">Membrane</location>
        <topology evidence="2">Peripheral membrane protein</topology>
    </subcellularLocation>
    <subcellularLocation>
        <location evidence="1">Cytoplasm</location>
        <location evidence="1">Cytoskeleton</location>
    </subcellularLocation>
</comment>
<comment type="similarity">
    <text evidence="6">Belongs to the dynactin subunit 2 family.</text>
</comment>
<feature type="initiator methionine" description="Removed" evidence="2">
    <location>
        <position position="1"/>
    </location>
</feature>
<feature type="chain" id="PRO_0000282604" description="Dynactin subunit 2">
    <location>
        <begin position="2"/>
        <end position="403"/>
    </location>
</feature>
<feature type="region of interest" description="Disordered" evidence="5">
    <location>
        <begin position="1"/>
        <end position="26"/>
    </location>
</feature>
<feature type="region of interest" description="Disordered" evidence="5">
    <location>
        <begin position="184"/>
        <end position="204"/>
    </location>
</feature>
<feature type="coiled-coil region" evidence="4">
    <location>
        <begin position="100"/>
        <end position="130"/>
    </location>
</feature>
<feature type="coiled-coil region" evidence="4">
    <location>
        <begin position="216"/>
        <end position="248"/>
    </location>
</feature>
<feature type="modified residue" description="N-acetylalanine" evidence="2">
    <location>
        <position position="2"/>
    </location>
</feature>
<feature type="modified residue" description="Phosphotyrosine" evidence="2">
    <location>
        <position position="6"/>
    </location>
</feature>
<feature type="modified residue" description="Phosphoserine" evidence="2">
    <location>
        <position position="83"/>
    </location>
</feature>
<feature type="modified residue" description="Phosphotyrosine" evidence="3">
    <location>
        <position position="86"/>
    </location>
</feature>
<feature type="modified residue" description="Phosphothreonine" evidence="2">
    <location>
        <position position="134"/>
    </location>
</feature>
<feature type="modified residue" description="Phosphothreonine" evidence="2">
    <location>
        <position position="200"/>
    </location>
</feature>
<feature type="modified residue" description="Phosphoserine" evidence="3">
    <location>
        <position position="322"/>
    </location>
</feature>
<name>DCTN2_BOVIN</name>
<organism>
    <name type="scientific">Bos taurus</name>
    <name type="common">Bovine</name>
    <dbReference type="NCBI Taxonomy" id="9913"/>
    <lineage>
        <taxon>Eukaryota</taxon>
        <taxon>Metazoa</taxon>
        <taxon>Chordata</taxon>
        <taxon>Craniata</taxon>
        <taxon>Vertebrata</taxon>
        <taxon>Euteleostomi</taxon>
        <taxon>Mammalia</taxon>
        <taxon>Eutheria</taxon>
        <taxon>Laurasiatheria</taxon>
        <taxon>Artiodactyla</taxon>
        <taxon>Ruminantia</taxon>
        <taxon>Pecora</taxon>
        <taxon>Bovidae</taxon>
        <taxon>Bovinae</taxon>
        <taxon>Bos</taxon>
    </lineage>
</organism>
<accession>Q3ZCF0</accession>
<keyword id="KW-0007">Acetylation</keyword>
<keyword id="KW-0175">Coiled coil</keyword>
<keyword id="KW-0963">Cytoplasm</keyword>
<keyword id="KW-0206">Cytoskeleton</keyword>
<keyword id="KW-0243">Dynein</keyword>
<keyword id="KW-0472">Membrane</keyword>
<keyword id="KW-0493">Microtubule</keyword>
<keyword id="KW-0597">Phosphoprotein</keyword>
<keyword id="KW-1185">Reference proteome</keyword>
<gene>
    <name type="primary">DCTN2</name>
</gene>
<dbReference type="EMBL" id="BC102441">
    <property type="protein sequence ID" value="AAI02442.1"/>
    <property type="molecule type" value="mRNA"/>
</dbReference>
<dbReference type="RefSeq" id="NP_001029730.1">
    <property type="nucleotide sequence ID" value="NM_001034558.1"/>
</dbReference>
<dbReference type="BioGRID" id="183812">
    <property type="interactions" value="1"/>
</dbReference>
<dbReference type="CORUM" id="Q3ZCF0"/>
<dbReference type="FunCoup" id="Q3ZCF0">
    <property type="interactions" value="3418"/>
</dbReference>
<dbReference type="STRING" id="9913.ENSBTAP00000066387"/>
<dbReference type="PaxDb" id="9913-ENSBTAP00000014053"/>
<dbReference type="PeptideAtlas" id="Q3ZCF0"/>
<dbReference type="GeneID" id="527201"/>
<dbReference type="KEGG" id="bta:527201"/>
<dbReference type="CTD" id="10540"/>
<dbReference type="VEuPathDB" id="HostDB:ENSBTAG00000010624"/>
<dbReference type="eggNOG" id="KOG3958">
    <property type="taxonomic scope" value="Eukaryota"/>
</dbReference>
<dbReference type="HOGENOM" id="CLU_049964_1_0_1"/>
<dbReference type="InParanoid" id="Q3ZCF0"/>
<dbReference type="OrthoDB" id="4977at2759"/>
<dbReference type="TreeFam" id="TF105247"/>
<dbReference type="Reactome" id="R-BTA-2132295">
    <property type="pathway name" value="MHC class II antigen presentation"/>
</dbReference>
<dbReference type="Reactome" id="R-BTA-2565942">
    <property type="pathway name" value="Regulation of PLK1 Activity at G2/M Transition"/>
</dbReference>
<dbReference type="Reactome" id="R-BTA-3371497">
    <property type="pathway name" value="HSP90 chaperone cycle for steroid hormone receptors (SHR) in the presence of ligand"/>
</dbReference>
<dbReference type="Reactome" id="R-BTA-380259">
    <property type="pathway name" value="Loss of Nlp from mitotic centrosomes"/>
</dbReference>
<dbReference type="Reactome" id="R-BTA-380270">
    <property type="pathway name" value="Recruitment of mitotic centrosome proteins and complexes"/>
</dbReference>
<dbReference type="Reactome" id="R-BTA-380284">
    <property type="pathway name" value="Loss of proteins required for interphase microtubule organization from the centrosome"/>
</dbReference>
<dbReference type="Reactome" id="R-BTA-380320">
    <property type="pathway name" value="Recruitment of NuMA to mitotic centrosomes"/>
</dbReference>
<dbReference type="Reactome" id="R-BTA-5620912">
    <property type="pathway name" value="Anchoring of the basal body to the plasma membrane"/>
</dbReference>
<dbReference type="Reactome" id="R-BTA-6807878">
    <property type="pathway name" value="COPI-mediated anterograde transport"/>
</dbReference>
<dbReference type="Reactome" id="R-BTA-6811436">
    <property type="pathway name" value="COPI-independent Golgi-to-ER retrograde traffic"/>
</dbReference>
<dbReference type="Reactome" id="R-BTA-8854518">
    <property type="pathway name" value="AURKA Activation by TPX2"/>
</dbReference>
<dbReference type="Proteomes" id="UP000009136">
    <property type="component" value="Chromosome 5"/>
</dbReference>
<dbReference type="Bgee" id="ENSBTAG00000010624">
    <property type="expression patterns" value="Expressed in myometrium and 105 other cell types or tissues"/>
</dbReference>
<dbReference type="GO" id="GO:0005813">
    <property type="term" value="C:centrosome"/>
    <property type="evidence" value="ECO:0000318"/>
    <property type="project" value="GO_Central"/>
</dbReference>
<dbReference type="GO" id="GO:0005737">
    <property type="term" value="C:cytoplasm"/>
    <property type="evidence" value="ECO:0000318"/>
    <property type="project" value="GO_Central"/>
</dbReference>
<dbReference type="GO" id="GO:0005869">
    <property type="term" value="C:dynactin complex"/>
    <property type="evidence" value="ECO:0000318"/>
    <property type="project" value="GO_Central"/>
</dbReference>
<dbReference type="GO" id="GO:0030286">
    <property type="term" value="C:dynein complex"/>
    <property type="evidence" value="ECO:0007669"/>
    <property type="project" value="UniProtKB-KW"/>
</dbReference>
<dbReference type="GO" id="GO:0016020">
    <property type="term" value="C:membrane"/>
    <property type="evidence" value="ECO:0007669"/>
    <property type="project" value="UniProtKB-SubCell"/>
</dbReference>
<dbReference type="GO" id="GO:0005874">
    <property type="term" value="C:microtubule"/>
    <property type="evidence" value="ECO:0007669"/>
    <property type="project" value="UniProtKB-KW"/>
</dbReference>
<dbReference type="GO" id="GO:0031982">
    <property type="term" value="C:vesicle"/>
    <property type="evidence" value="ECO:0000250"/>
    <property type="project" value="UniProtKB"/>
</dbReference>
<dbReference type="GO" id="GO:0007052">
    <property type="term" value="P:mitotic spindle organization"/>
    <property type="evidence" value="ECO:0000318"/>
    <property type="project" value="GO_Central"/>
</dbReference>
<dbReference type="InterPro" id="IPR028133">
    <property type="entry name" value="Dynamitin"/>
</dbReference>
<dbReference type="PANTHER" id="PTHR15346">
    <property type="entry name" value="DYNACTIN SUBUNIT"/>
    <property type="match status" value="1"/>
</dbReference>
<dbReference type="Pfam" id="PF04912">
    <property type="entry name" value="Dynamitin"/>
    <property type="match status" value="1"/>
</dbReference>
<sequence>MADPKYADLPGIARNEPDVYETSDLPEDDQAEFDAEELTSTSVEHIIVNPNAAYDKFKDKRVGTKGLDFSDRIGKTKRTGYESGEYEMLGEGLGVKETPQQKYQRLLHEVQELTTEVEKIKTTVKESATEEKLTPVVLAKQLAALKQQLVASHLEKLLGPDAAINLTDPDGALAKRLLLQLEATKNSKGTGSGGKTTSGTPPDSSLVTYELHSRPEQDKFSQAAKVAELEKRLTELEATVRCDQDAQNPLSAGLQGACLMDTVELLQAKVGALDLAVLDQVEARLQSVLGKVNEIAKHKASVEDADTQSKVHQLYETIQRWSPIAASLPELVQRLVTIKQLHEQAMQFGQLLTHLDTTQQMIACSLKDNATLLTQVQTTMCENLSTIEGNFANIDERMKKLGK</sequence>
<reference key="1">
    <citation type="submission" date="2005-08" db="EMBL/GenBank/DDBJ databases">
        <authorList>
            <consortium name="NIH - Mammalian Gene Collection (MGC) project"/>
        </authorList>
    </citation>
    <scope>NUCLEOTIDE SEQUENCE [LARGE SCALE MRNA]</scope>
    <source>
        <strain>Crossbred X Angus</strain>
        <tissue>Ileum</tissue>
    </source>
</reference>
<protein>
    <recommendedName>
        <fullName>Dynactin subunit 2</fullName>
    </recommendedName>
</protein>